<keyword id="KW-0472">Membrane</keyword>
<keyword id="KW-1185">Reference proteome</keyword>
<keyword id="KW-0812">Transmembrane</keyword>
<keyword id="KW-1133">Transmembrane helix</keyword>
<protein>
    <recommendedName>
        <fullName>Protein cornichon homolog 2</fullName>
        <shortName>CNIH-2</shortName>
    </recommendedName>
    <alternativeName>
        <fullName>Cornichon family AMPA receptor auxiliary protein 2</fullName>
    </alternativeName>
</protein>
<dbReference type="EMBL" id="BC118797">
    <property type="protein sequence ID" value="AAI18798.1"/>
    <property type="molecule type" value="mRNA"/>
</dbReference>
<dbReference type="RefSeq" id="NP_001072219.1">
    <property type="nucleotide sequence ID" value="NM_001078751.1"/>
</dbReference>
<dbReference type="SMR" id="Q0VFK3"/>
<dbReference type="FunCoup" id="Q0VFK3">
    <property type="interactions" value="109"/>
</dbReference>
<dbReference type="STRING" id="8364.ENSXETP00000016261"/>
<dbReference type="PaxDb" id="8364-ENSXETP00000018450"/>
<dbReference type="DNASU" id="779666"/>
<dbReference type="GeneID" id="779666"/>
<dbReference type="KEGG" id="xtr:779666"/>
<dbReference type="AGR" id="Xenbase:XB-GENE-952875"/>
<dbReference type="CTD" id="254263"/>
<dbReference type="Xenbase" id="XB-GENE-952875">
    <property type="gene designation" value="cnih2"/>
</dbReference>
<dbReference type="eggNOG" id="KOG2729">
    <property type="taxonomic scope" value="Eukaryota"/>
</dbReference>
<dbReference type="HOGENOM" id="CLU_112942_1_0_1"/>
<dbReference type="InParanoid" id="Q0VFK3"/>
<dbReference type="OMA" id="ESWCKMG"/>
<dbReference type="OrthoDB" id="434393at2759"/>
<dbReference type="PhylomeDB" id="Q0VFK3"/>
<dbReference type="TreeFam" id="TF300083"/>
<dbReference type="Reactome" id="R-XTR-204005">
    <property type="pathway name" value="COPII-mediated vesicle transport"/>
</dbReference>
<dbReference type="Reactome" id="R-XTR-5694530">
    <property type="pathway name" value="Cargo concentration in the ER"/>
</dbReference>
<dbReference type="Proteomes" id="UP000008143">
    <property type="component" value="Chromosome 4"/>
</dbReference>
<dbReference type="Bgee" id="ENSXETG00000008423">
    <property type="expression patterns" value="Expressed in brain and 1 other cell type or tissue"/>
</dbReference>
<dbReference type="GO" id="GO:0016020">
    <property type="term" value="C:membrane"/>
    <property type="evidence" value="ECO:0007669"/>
    <property type="project" value="UniProtKB-SubCell"/>
</dbReference>
<dbReference type="GO" id="GO:0016192">
    <property type="term" value="P:vesicle-mediated transport"/>
    <property type="evidence" value="ECO:0007669"/>
    <property type="project" value="InterPro"/>
</dbReference>
<dbReference type="InterPro" id="IPR003377">
    <property type="entry name" value="Cornichon"/>
</dbReference>
<dbReference type="InterPro" id="IPR033466">
    <property type="entry name" value="Cornichon_conserved"/>
</dbReference>
<dbReference type="PANTHER" id="PTHR12290">
    <property type="entry name" value="CORNICHON-RELATED"/>
    <property type="match status" value="1"/>
</dbReference>
<dbReference type="Pfam" id="PF03311">
    <property type="entry name" value="Cornichon"/>
    <property type="match status" value="1"/>
</dbReference>
<dbReference type="SMART" id="SM01398">
    <property type="entry name" value="Cornichon"/>
    <property type="match status" value="1"/>
</dbReference>
<dbReference type="PROSITE" id="PS01340">
    <property type="entry name" value="CORNICHON"/>
    <property type="match status" value="1"/>
</dbReference>
<evidence type="ECO:0000250" key="1"/>
<evidence type="ECO:0000255" key="2"/>
<evidence type="ECO:0000305" key="3"/>
<comment type="function">
    <text evidence="1">Regulates the trafficking and gating properties of AMPA-selective glutamate receptors (AMPARs).</text>
</comment>
<comment type="subcellular location">
    <subcellularLocation>
        <location evidence="3">Membrane</location>
        <topology evidence="3">Multi-pass membrane protein</topology>
    </subcellularLocation>
</comment>
<comment type="similarity">
    <text evidence="3">Belongs to the cornichon family.</text>
</comment>
<gene>
    <name type="primary">cnih2</name>
</gene>
<sequence>MAFTFAAFCYMLTLVLCASLIFFIIWHIIAFDELRTDFKNPIEQGNPSRARERVKNVERICCLLRKLVVPEYCIHGLFCLMFMCAAEWVTLGLNIPLLFYHLWRYFHRPADGSEVMFDPVSIMNVDILNYCQKEAWCKLAFYLLSFFYYLYRVGATVRYVSA</sequence>
<proteinExistence type="evidence at transcript level"/>
<feature type="chain" id="PRO_0000408977" description="Protein cornichon homolog 2">
    <location>
        <begin position="1"/>
        <end position="162"/>
    </location>
</feature>
<feature type="topological domain" description="Cytoplasmic" evidence="2">
    <location>
        <begin position="1"/>
        <end position="10"/>
    </location>
</feature>
<feature type="transmembrane region" description="Helical" evidence="2">
    <location>
        <begin position="11"/>
        <end position="31"/>
    </location>
</feature>
<feature type="topological domain" description="Lumenal" evidence="2">
    <location>
        <begin position="32"/>
        <end position="72"/>
    </location>
</feature>
<feature type="transmembrane region" description="Helical" evidence="2">
    <location>
        <begin position="73"/>
        <end position="93"/>
    </location>
</feature>
<feature type="topological domain" description="Cytoplasmic" evidence="2">
    <location>
        <begin position="94"/>
        <end position="138"/>
    </location>
</feature>
<feature type="transmembrane region" description="Helical" evidence="2">
    <location>
        <begin position="139"/>
        <end position="161"/>
    </location>
</feature>
<feature type="topological domain" description="Lumenal" evidence="2">
    <location>
        <position position="162"/>
    </location>
</feature>
<name>CNIH2_XENTR</name>
<reference key="1">
    <citation type="submission" date="2006-07" db="EMBL/GenBank/DDBJ databases">
        <authorList>
            <consortium name="NIH - Xenopus Gene Collection (XGC) project"/>
        </authorList>
    </citation>
    <scope>NUCLEOTIDE SEQUENCE [LARGE SCALE MRNA]</scope>
    <source>
        <tissue>Brain</tissue>
    </source>
</reference>
<organism>
    <name type="scientific">Xenopus tropicalis</name>
    <name type="common">Western clawed frog</name>
    <name type="synonym">Silurana tropicalis</name>
    <dbReference type="NCBI Taxonomy" id="8364"/>
    <lineage>
        <taxon>Eukaryota</taxon>
        <taxon>Metazoa</taxon>
        <taxon>Chordata</taxon>
        <taxon>Craniata</taxon>
        <taxon>Vertebrata</taxon>
        <taxon>Euteleostomi</taxon>
        <taxon>Amphibia</taxon>
        <taxon>Batrachia</taxon>
        <taxon>Anura</taxon>
        <taxon>Pipoidea</taxon>
        <taxon>Pipidae</taxon>
        <taxon>Xenopodinae</taxon>
        <taxon>Xenopus</taxon>
        <taxon>Silurana</taxon>
    </lineage>
</organism>
<accession>Q0VFK3</accession>